<organism>
    <name type="scientific">Limosilactobacillus reuteri subsp. reuteri (strain JCM 1112)</name>
    <name type="common">Lactobacillus reuteri</name>
    <dbReference type="NCBI Taxonomy" id="557433"/>
    <lineage>
        <taxon>Bacteria</taxon>
        <taxon>Bacillati</taxon>
        <taxon>Bacillota</taxon>
        <taxon>Bacilli</taxon>
        <taxon>Lactobacillales</taxon>
        <taxon>Lactobacillaceae</taxon>
        <taxon>Limosilactobacillus</taxon>
    </lineage>
</organism>
<comment type="similarity">
    <text evidence="1">Belongs to the bacterial ribosomal protein bL32 family.</text>
</comment>
<gene>
    <name evidence="1" type="primary">rpmF</name>
    <name type="ordered locus">LAR_1162</name>
</gene>
<name>RL32_LIMRJ</name>
<accession>B2G896</accession>
<reference key="1">
    <citation type="journal article" date="2008" name="DNA Res.">
        <title>Comparative genome analysis of Lactobacillus reuteri and Lactobacillus fermentum reveal a genomic island for reuterin and cobalamin production.</title>
        <authorList>
            <person name="Morita H."/>
            <person name="Toh H."/>
            <person name="Fukuda S."/>
            <person name="Horikawa H."/>
            <person name="Oshima K."/>
            <person name="Suzuki T."/>
            <person name="Murakami M."/>
            <person name="Hisamatsu S."/>
            <person name="Kato Y."/>
            <person name="Takizawa T."/>
            <person name="Fukuoka H."/>
            <person name="Yoshimura T."/>
            <person name="Itoh K."/>
            <person name="O'Sullivan D.J."/>
            <person name="McKay L.L."/>
            <person name="Ohno H."/>
            <person name="Kikuchi J."/>
            <person name="Masaoka T."/>
            <person name="Hattori M."/>
        </authorList>
    </citation>
    <scope>NUCLEOTIDE SEQUENCE [LARGE SCALE GENOMIC DNA]</scope>
    <source>
        <strain>JCM 1112</strain>
    </source>
</reference>
<evidence type="ECO:0000255" key="1">
    <source>
        <dbReference type="HAMAP-Rule" id="MF_00340"/>
    </source>
</evidence>
<evidence type="ECO:0000305" key="2"/>
<dbReference type="EMBL" id="AP007281">
    <property type="protein sequence ID" value="BAG25678.1"/>
    <property type="molecule type" value="Genomic_DNA"/>
</dbReference>
<dbReference type="RefSeq" id="WP_003664092.1">
    <property type="nucleotide sequence ID" value="NC_010609.1"/>
</dbReference>
<dbReference type="SMR" id="B2G896"/>
<dbReference type="GeneID" id="77191899"/>
<dbReference type="KEGG" id="lrf:LAR_1162"/>
<dbReference type="HOGENOM" id="CLU_129084_1_3_9"/>
<dbReference type="GO" id="GO:0015934">
    <property type="term" value="C:large ribosomal subunit"/>
    <property type="evidence" value="ECO:0007669"/>
    <property type="project" value="InterPro"/>
</dbReference>
<dbReference type="GO" id="GO:0003735">
    <property type="term" value="F:structural constituent of ribosome"/>
    <property type="evidence" value="ECO:0007669"/>
    <property type="project" value="InterPro"/>
</dbReference>
<dbReference type="GO" id="GO:0006412">
    <property type="term" value="P:translation"/>
    <property type="evidence" value="ECO:0007669"/>
    <property type="project" value="UniProtKB-UniRule"/>
</dbReference>
<dbReference type="HAMAP" id="MF_00340">
    <property type="entry name" value="Ribosomal_bL32"/>
    <property type="match status" value="1"/>
</dbReference>
<dbReference type="InterPro" id="IPR002677">
    <property type="entry name" value="Ribosomal_bL32"/>
</dbReference>
<dbReference type="InterPro" id="IPR044957">
    <property type="entry name" value="Ribosomal_bL32_bact"/>
</dbReference>
<dbReference type="InterPro" id="IPR011332">
    <property type="entry name" value="Ribosomal_zn-bd"/>
</dbReference>
<dbReference type="NCBIfam" id="TIGR01031">
    <property type="entry name" value="rpmF_bact"/>
    <property type="match status" value="1"/>
</dbReference>
<dbReference type="PANTHER" id="PTHR35534">
    <property type="entry name" value="50S RIBOSOMAL PROTEIN L32"/>
    <property type="match status" value="1"/>
</dbReference>
<dbReference type="PANTHER" id="PTHR35534:SF1">
    <property type="entry name" value="LARGE RIBOSOMAL SUBUNIT PROTEIN BL32"/>
    <property type="match status" value="1"/>
</dbReference>
<dbReference type="Pfam" id="PF01783">
    <property type="entry name" value="Ribosomal_L32p"/>
    <property type="match status" value="1"/>
</dbReference>
<dbReference type="SUPFAM" id="SSF57829">
    <property type="entry name" value="Zn-binding ribosomal proteins"/>
    <property type="match status" value="1"/>
</dbReference>
<keyword id="KW-0687">Ribonucleoprotein</keyword>
<keyword id="KW-0689">Ribosomal protein</keyword>
<sequence>MAVPARKTSKTKKRMRRGHIKLNVPGLTPCPNCGELRKSHMVCPSCGYYDGKQVVNTNN</sequence>
<proteinExistence type="inferred from homology"/>
<feature type="chain" id="PRO_1000120137" description="Large ribosomal subunit protein bL32">
    <location>
        <begin position="1"/>
        <end position="59"/>
    </location>
</feature>
<protein>
    <recommendedName>
        <fullName evidence="1">Large ribosomal subunit protein bL32</fullName>
    </recommendedName>
    <alternativeName>
        <fullName evidence="2">50S ribosomal protein L32</fullName>
    </alternativeName>
</protein>